<sequence>MRSRWQTLRKWIVKAVLLFFVSSLGFVLLYRFVPVPLTPLMVIRSVSSVWGEEFVGIHKDWVPLEEIAPSVQKAVLKAEDYRFFEHNGFDFDAIEKAMKYNKTHKRKKGASTITQQTAKNVFLWPQRDWVRKGLEAYFTILIESTWPKERIMEVYLNVIELGPGVYGVEAASQKYFKRSAKNLNPYQASLIAAVLPNPRRFRIDRPSNYVVGRQRRILNRVAPAIPKAADASLLDFLDLKFDSEEDESAN</sequence>
<protein>
    <recommendedName>
        <fullName evidence="1">Biosynthetic peptidoglycan transglycosylase</fullName>
        <ecNumber evidence="1">2.4.99.28</ecNumber>
    </recommendedName>
    <alternativeName>
        <fullName evidence="1">Glycan polymerase</fullName>
    </alternativeName>
    <alternativeName>
        <fullName evidence="1">Peptidoglycan glycosyltransferase MtgA</fullName>
        <shortName evidence="1">PGT</shortName>
    </alternativeName>
</protein>
<gene>
    <name evidence="1" type="primary">mtgA</name>
    <name type="ordered locus">Bd2847</name>
</gene>
<name>MTGA_BDEBA</name>
<keyword id="KW-0997">Cell inner membrane</keyword>
<keyword id="KW-1003">Cell membrane</keyword>
<keyword id="KW-0133">Cell shape</keyword>
<keyword id="KW-0961">Cell wall biogenesis/degradation</keyword>
<keyword id="KW-0328">Glycosyltransferase</keyword>
<keyword id="KW-0472">Membrane</keyword>
<keyword id="KW-0573">Peptidoglycan synthesis</keyword>
<keyword id="KW-1185">Reference proteome</keyword>
<keyword id="KW-0808">Transferase</keyword>
<keyword id="KW-0812">Transmembrane</keyword>
<keyword id="KW-1133">Transmembrane helix</keyword>
<feature type="chain" id="PRO_0000257657" description="Biosynthetic peptidoglycan transglycosylase">
    <location>
        <begin position="1"/>
        <end position="250"/>
    </location>
</feature>
<feature type="transmembrane region" description="Helical" evidence="1">
    <location>
        <begin position="15"/>
        <end position="35"/>
    </location>
</feature>
<accession>Q3V7R3</accession>
<reference key="1">
    <citation type="journal article" date="2004" name="Science">
        <title>A predator unmasked: life cycle of Bdellovibrio bacteriovorus from a genomic perspective.</title>
        <authorList>
            <person name="Rendulic S."/>
            <person name="Jagtap P."/>
            <person name="Rosinus A."/>
            <person name="Eppinger M."/>
            <person name="Baar C."/>
            <person name="Lanz C."/>
            <person name="Keller H."/>
            <person name="Lambert C."/>
            <person name="Evans K.J."/>
            <person name="Goesmann A."/>
            <person name="Meyer F."/>
            <person name="Sockett R.E."/>
            <person name="Schuster S.C."/>
        </authorList>
    </citation>
    <scope>NUCLEOTIDE SEQUENCE [LARGE SCALE GENOMIC DNA]</scope>
    <source>
        <strain>ATCC 15356 / DSM 50701 / NCIMB 9529 / HD100</strain>
    </source>
</reference>
<proteinExistence type="inferred from homology"/>
<evidence type="ECO:0000255" key="1">
    <source>
        <dbReference type="HAMAP-Rule" id="MF_00766"/>
    </source>
</evidence>
<organism>
    <name type="scientific">Bdellovibrio bacteriovorus (strain ATCC 15356 / DSM 50701 / NCIMB 9529 / HD100)</name>
    <dbReference type="NCBI Taxonomy" id="264462"/>
    <lineage>
        <taxon>Bacteria</taxon>
        <taxon>Pseudomonadati</taxon>
        <taxon>Bdellovibrionota</taxon>
        <taxon>Bdellovibrionia</taxon>
        <taxon>Bdellovibrionales</taxon>
        <taxon>Pseudobdellovibrionaceae</taxon>
        <taxon>Bdellovibrio</taxon>
    </lineage>
</organism>
<comment type="function">
    <text evidence="1">Peptidoglycan polymerase that catalyzes glycan chain elongation from lipid-linked precursors.</text>
</comment>
<comment type="catalytic activity">
    <reaction evidence="1">
        <text>[GlcNAc-(1-&gt;4)-Mur2Ac(oyl-L-Ala-gamma-D-Glu-L-Lys-D-Ala-D-Ala)](n)-di-trans,octa-cis-undecaprenyl diphosphate + beta-D-GlcNAc-(1-&gt;4)-Mur2Ac(oyl-L-Ala-gamma-D-Glu-L-Lys-D-Ala-D-Ala)-di-trans,octa-cis-undecaprenyl diphosphate = [GlcNAc-(1-&gt;4)-Mur2Ac(oyl-L-Ala-gamma-D-Glu-L-Lys-D-Ala-D-Ala)](n+1)-di-trans,octa-cis-undecaprenyl diphosphate + di-trans,octa-cis-undecaprenyl diphosphate + H(+)</text>
        <dbReference type="Rhea" id="RHEA:23708"/>
        <dbReference type="Rhea" id="RHEA-COMP:9602"/>
        <dbReference type="Rhea" id="RHEA-COMP:9603"/>
        <dbReference type="ChEBI" id="CHEBI:15378"/>
        <dbReference type="ChEBI" id="CHEBI:58405"/>
        <dbReference type="ChEBI" id="CHEBI:60033"/>
        <dbReference type="ChEBI" id="CHEBI:78435"/>
        <dbReference type="EC" id="2.4.99.28"/>
    </reaction>
</comment>
<comment type="pathway">
    <text evidence="1">Cell wall biogenesis; peptidoglycan biosynthesis.</text>
</comment>
<comment type="subcellular location">
    <subcellularLocation>
        <location evidence="1">Cell inner membrane</location>
        <topology evidence="1">Single-pass membrane protein</topology>
    </subcellularLocation>
</comment>
<comment type="similarity">
    <text evidence="1">Belongs to the glycosyltransferase 51 family.</text>
</comment>
<dbReference type="EC" id="2.4.99.28" evidence="1"/>
<dbReference type="EMBL" id="BX842653">
    <property type="protein sequence ID" value="CAE80628.1"/>
    <property type="molecule type" value="Genomic_DNA"/>
</dbReference>
<dbReference type="RefSeq" id="WP_011165231.1">
    <property type="nucleotide sequence ID" value="NC_005363.1"/>
</dbReference>
<dbReference type="SMR" id="Q3V7R3"/>
<dbReference type="STRING" id="264462.Bd2847"/>
<dbReference type="CAZy" id="GT51">
    <property type="family name" value="Glycosyltransferase Family 51"/>
</dbReference>
<dbReference type="GeneID" id="93013723"/>
<dbReference type="KEGG" id="bba:Bd2847"/>
<dbReference type="eggNOG" id="COG0744">
    <property type="taxonomic scope" value="Bacteria"/>
</dbReference>
<dbReference type="HOGENOM" id="CLU_006354_1_1_7"/>
<dbReference type="UniPathway" id="UPA00219"/>
<dbReference type="Proteomes" id="UP000008080">
    <property type="component" value="Chromosome"/>
</dbReference>
<dbReference type="GO" id="GO:0009274">
    <property type="term" value="C:peptidoglycan-based cell wall"/>
    <property type="evidence" value="ECO:0007669"/>
    <property type="project" value="InterPro"/>
</dbReference>
<dbReference type="GO" id="GO:0005886">
    <property type="term" value="C:plasma membrane"/>
    <property type="evidence" value="ECO:0007669"/>
    <property type="project" value="UniProtKB-SubCell"/>
</dbReference>
<dbReference type="GO" id="GO:0016763">
    <property type="term" value="F:pentosyltransferase activity"/>
    <property type="evidence" value="ECO:0007669"/>
    <property type="project" value="InterPro"/>
</dbReference>
<dbReference type="GO" id="GO:0008955">
    <property type="term" value="F:peptidoglycan glycosyltransferase activity"/>
    <property type="evidence" value="ECO:0007669"/>
    <property type="project" value="UniProtKB-UniRule"/>
</dbReference>
<dbReference type="GO" id="GO:0071555">
    <property type="term" value="P:cell wall organization"/>
    <property type="evidence" value="ECO:0007669"/>
    <property type="project" value="UniProtKB-KW"/>
</dbReference>
<dbReference type="GO" id="GO:0009252">
    <property type="term" value="P:peptidoglycan biosynthetic process"/>
    <property type="evidence" value="ECO:0007669"/>
    <property type="project" value="UniProtKB-UniRule"/>
</dbReference>
<dbReference type="GO" id="GO:0008360">
    <property type="term" value="P:regulation of cell shape"/>
    <property type="evidence" value="ECO:0007669"/>
    <property type="project" value="UniProtKB-KW"/>
</dbReference>
<dbReference type="Gene3D" id="1.10.3810.10">
    <property type="entry name" value="Biosynthetic peptidoglycan transglycosylase-like"/>
    <property type="match status" value="1"/>
</dbReference>
<dbReference type="HAMAP" id="MF_00766">
    <property type="entry name" value="PGT_MtgA"/>
    <property type="match status" value="1"/>
</dbReference>
<dbReference type="InterPro" id="IPR001264">
    <property type="entry name" value="Glyco_trans_51"/>
</dbReference>
<dbReference type="InterPro" id="IPR023346">
    <property type="entry name" value="Lysozyme-like_dom_sf"/>
</dbReference>
<dbReference type="InterPro" id="IPR036950">
    <property type="entry name" value="PBP_transglycosylase"/>
</dbReference>
<dbReference type="InterPro" id="IPR011812">
    <property type="entry name" value="Pep_trsgly"/>
</dbReference>
<dbReference type="NCBIfam" id="TIGR02070">
    <property type="entry name" value="mono_pep_trsgly"/>
    <property type="match status" value="1"/>
</dbReference>
<dbReference type="PANTHER" id="PTHR30400:SF0">
    <property type="entry name" value="BIOSYNTHETIC PEPTIDOGLYCAN TRANSGLYCOSYLASE"/>
    <property type="match status" value="1"/>
</dbReference>
<dbReference type="PANTHER" id="PTHR30400">
    <property type="entry name" value="MONOFUNCTIONAL BIOSYNTHETIC PEPTIDOGLYCAN TRANSGLYCOSYLASE"/>
    <property type="match status" value="1"/>
</dbReference>
<dbReference type="Pfam" id="PF00912">
    <property type="entry name" value="Transgly"/>
    <property type="match status" value="1"/>
</dbReference>
<dbReference type="SUPFAM" id="SSF53955">
    <property type="entry name" value="Lysozyme-like"/>
    <property type="match status" value="1"/>
</dbReference>